<keyword id="KW-0131">Cell cycle</keyword>
<keyword id="KW-0132">Cell division</keyword>
<keyword id="KW-0574">Periplasm</keyword>
<keyword id="KW-0732">Signal</keyword>
<comment type="function">
    <text evidence="1">Part of the Tol-Pal system, which plays a role in outer membrane invagination during cell division and is important for maintaining outer membrane integrity.</text>
</comment>
<comment type="subunit">
    <text evidence="1">The Tol-Pal system is composed of five core proteins: the inner membrane proteins TolA, TolQ and TolR, the periplasmic protein TolB and the outer membrane protein Pal. They form a network linking the inner and outer membranes and the peptidoglycan layer.</text>
</comment>
<comment type="subcellular location">
    <subcellularLocation>
        <location evidence="1">Periplasm</location>
    </subcellularLocation>
</comment>
<comment type="similarity">
    <text evidence="1">Belongs to the TolB family.</text>
</comment>
<protein>
    <recommendedName>
        <fullName evidence="1">Tol-Pal system protein TolB</fullName>
    </recommendedName>
</protein>
<accession>A5UAA5</accession>
<organism>
    <name type="scientific">Haemophilus influenzae (strain PittEE)</name>
    <dbReference type="NCBI Taxonomy" id="374930"/>
    <lineage>
        <taxon>Bacteria</taxon>
        <taxon>Pseudomonadati</taxon>
        <taxon>Pseudomonadota</taxon>
        <taxon>Gammaproteobacteria</taxon>
        <taxon>Pasteurellales</taxon>
        <taxon>Pasteurellaceae</taxon>
        <taxon>Haemophilus</taxon>
    </lineage>
</organism>
<name>TOLB_HAEIE</name>
<gene>
    <name evidence="1" type="primary">tolB</name>
    <name type="ordered locus">CGSHiEE_01090</name>
</gene>
<sequence length="427" mass="45056">MKLLKRLVSVFAIVLAVGSNAFAGDEVRIVIDEGVDGARPIAVVPFVGSAPEDISKIVADDLRNSGKFNPIAVSQMPQRPTSAAEVNPEAWSNIGIDAIVIGQVVPSGNGYSITYQLIDTVGASGTPGTVLMQNSYTVTNKWLRYGAHTVSDEVFEKLTAIRGAFRTRIAYVVQKNGGSQPYEVRVADYDGYNQFIVNRSAQPIMSPAWSPDGQRLAYVSFENKKSQLVVQDLNFGARKVVASFQGHNGAPAFSPDGSRLAFASSRDGVLNIYVMGANGGTPTQLTSGAGNNTEPAWSPDGNSILFTSDRSGSPQVYRMDASGGSATVVGGRGSAQISADGKTLVMINGNNNVVKQDLTTGVSEVLSTSFLGESPSLSPNGIMIIYSSTQGLGKVLQLVSADGRFKASLPGSDGQVKFPAWSPYLTK</sequence>
<evidence type="ECO:0000255" key="1">
    <source>
        <dbReference type="HAMAP-Rule" id="MF_00671"/>
    </source>
</evidence>
<feature type="signal peptide" evidence="1">
    <location>
        <begin position="1"/>
        <end position="23"/>
    </location>
</feature>
<feature type="chain" id="PRO_1000026703" description="Tol-Pal system protein TolB" evidence="1">
    <location>
        <begin position="24"/>
        <end position="427"/>
    </location>
</feature>
<proteinExistence type="inferred from homology"/>
<dbReference type="EMBL" id="CP000671">
    <property type="protein sequence ID" value="ABQ97706.1"/>
    <property type="molecule type" value="Genomic_DNA"/>
</dbReference>
<dbReference type="SMR" id="A5UAA5"/>
<dbReference type="KEGG" id="hip:CGSHiEE_01090"/>
<dbReference type="HOGENOM" id="CLU_047123_0_0_6"/>
<dbReference type="GO" id="GO:0042597">
    <property type="term" value="C:periplasmic space"/>
    <property type="evidence" value="ECO:0007669"/>
    <property type="project" value="UniProtKB-SubCell"/>
</dbReference>
<dbReference type="GO" id="GO:0051301">
    <property type="term" value="P:cell division"/>
    <property type="evidence" value="ECO:0007669"/>
    <property type="project" value="UniProtKB-UniRule"/>
</dbReference>
<dbReference type="GO" id="GO:0017038">
    <property type="term" value="P:protein import"/>
    <property type="evidence" value="ECO:0007669"/>
    <property type="project" value="InterPro"/>
</dbReference>
<dbReference type="Gene3D" id="2.120.10.30">
    <property type="entry name" value="TolB, C-terminal domain"/>
    <property type="match status" value="1"/>
</dbReference>
<dbReference type="Gene3D" id="3.40.50.10070">
    <property type="entry name" value="TolB, N-terminal domain"/>
    <property type="match status" value="1"/>
</dbReference>
<dbReference type="HAMAP" id="MF_00671">
    <property type="entry name" value="TolB"/>
    <property type="match status" value="1"/>
</dbReference>
<dbReference type="InterPro" id="IPR011042">
    <property type="entry name" value="6-blade_b-propeller_TolB-like"/>
</dbReference>
<dbReference type="InterPro" id="IPR011659">
    <property type="entry name" value="PD40"/>
</dbReference>
<dbReference type="InterPro" id="IPR014167">
    <property type="entry name" value="Tol-Pal_TolB"/>
</dbReference>
<dbReference type="InterPro" id="IPR007195">
    <property type="entry name" value="TolB_N"/>
</dbReference>
<dbReference type="NCBIfam" id="TIGR02800">
    <property type="entry name" value="propeller_TolB"/>
    <property type="match status" value="1"/>
</dbReference>
<dbReference type="PANTHER" id="PTHR36842:SF1">
    <property type="entry name" value="PROTEIN TOLB"/>
    <property type="match status" value="1"/>
</dbReference>
<dbReference type="PANTHER" id="PTHR36842">
    <property type="entry name" value="PROTEIN TOLB HOMOLOG"/>
    <property type="match status" value="1"/>
</dbReference>
<dbReference type="Pfam" id="PF07676">
    <property type="entry name" value="PD40"/>
    <property type="match status" value="4"/>
</dbReference>
<dbReference type="Pfam" id="PF04052">
    <property type="entry name" value="TolB_N"/>
    <property type="match status" value="1"/>
</dbReference>
<dbReference type="SUPFAM" id="SSF52964">
    <property type="entry name" value="TolB, N-terminal domain"/>
    <property type="match status" value="1"/>
</dbReference>
<dbReference type="SUPFAM" id="SSF69304">
    <property type="entry name" value="Tricorn protease N-terminal domain"/>
    <property type="match status" value="1"/>
</dbReference>
<reference key="1">
    <citation type="journal article" date="2007" name="Genome Biol.">
        <title>Characterization and modeling of the Haemophilus influenzae core and supragenomes based on the complete genomic sequences of Rd and 12 clinical nontypeable strains.</title>
        <authorList>
            <person name="Hogg J.S."/>
            <person name="Hu F.Z."/>
            <person name="Janto B."/>
            <person name="Boissy R."/>
            <person name="Hayes J."/>
            <person name="Keefe R."/>
            <person name="Post J.C."/>
            <person name="Ehrlich G.D."/>
        </authorList>
    </citation>
    <scope>NUCLEOTIDE SEQUENCE [LARGE SCALE GENOMIC DNA]</scope>
    <source>
        <strain>PittEE</strain>
    </source>
</reference>